<proteinExistence type="inferred from homology"/>
<feature type="chain" id="PRO_0000277160" description="Large ribosomal subunit protein bL31c">
    <location>
        <begin position="1"/>
        <end position="72"/>
    </location>
</feature>
<organism>
    <name type="scientific">Thalassiosira pseudonana</name>
    <name type="common">Marine diatom</name>
    <name type="synonym">Cyclotella nana</name>
    <dbReference type="NCBI Taxonomy" id="35128"/>
    <lineage>
        <taxon>Eukaryota</taxon>
        <taxon>Sar</taxon>
        <taxon>Stramenopiles</taxon>
        <taxon>Ochrophyta</taxon>
        <taxon>Bacillariophyta</taxon>
        <taxon>Coscinodiscophyceae</taxon>
        <taxon>Thalassiosirophycidae</taxon>
        <taxon>Thalassiosirales</taxon>
        <taxon>Thalassiosiraceae</taxon>
        <taxon>Thalassiosira</taxon>
    </lineage>
</organism>
<comment type="function">
    <text evidence="1">Binds the 23S rRNA.</text>
</comment>
<comment type="subunit">
    <text evidence="1">Part of the 50S ribosomal subunit.</text>
</comment>
<comment type="subcellular location">
    <subcellularLocation>
        <location>Plastid</location>
        <location>Chloroplast</location>
    </subcellularLocation>
</comment>
<comment type="similarity">
    <text evidence="2">Belongs to the bacterial ribosomal protein bL31 family. Type A subfamily.</text>
</comment>
<reference key="1">
    <citation type="journal article" date="2007" name="Mol. Genet. Genomics">
        <title>Chloroplast genomes of the diatoms Phaeodactylum tricornutum and Thalassiosira pseudonana: comparison with other plastid genomes of the red lineage.</title>
        <authorList>
            <person name="Oudot-Le Secq M.-P."/>
            <person name="Grimwood J."/>
            <person name="Shapiro H."/>
            <person name="Armbrust E.V."/>
            <person name="Bowler C."/>
            <person name="Green B.R."/>
        </authorList>
    </citation>
    <scope>NUCLEOTIDE SEQUENCE [LARGE SCALE GENOMIC DNA]</scope>
    <source>
        <strain>CCMP1335 / NEPCC58 / CCAP 1085/12</strain>
    </source>
</reference>
<evidence type="ECO:0000250" key="1"/>
<evidence type="ECO:0000305" key="2"/>
<gene>
    <name type="primary">rpl31</name>
</gene>
<dbReference type="EMBL" id="EF067921">
    <property type="protein sequence ID" value="ABK20832.1"/>
    <property type="molecule type" value="Genomic_DNA"/>
</dbReference>
<dbReference type="RefSeq" id="YP_874609.1">
    <property type="nucleotide sequence ID" value="NC_008589.1"/>
</dbReference>
<dbReference type="STRING" id="35128.A0T0Z7"/>
<dbReference type="GeneID" id="4524809"/>
<dbReference type="InParanoid" id="A0T0Z7"/>
<dbReference type="GO" id="GO:0009507">
    <property type="term" value="C:chloroplast"/>
    <property type="evidence" value="ECO:0007669"/>
    <property type="project" value="UniProtKB-SubCell"/>
</dbReference>
<dbReference type="GO" id="GO:1990904">
    <property type="term" value="C:ribonucleoprotein complex"/>
    <property type="evidence" value="ECO:0007669"/>
    <property type="project" value="UniProtKB-KW"/>
</dbReference>
<dbReference type="GO" id="GO:0005840">
    <property type="term" value="C:ribosome"/>
    <property type="evidence" value="ECO:0007669"/>
    <property type="project" value="UniProtKB-KW"/>
</dbReference>
<dbReference type="GO" id="GO:0019843">
    <property type="term" value="F:rRNA binding"/>
    <property type="evidence" value="ECO:0007669"/>
    <property type="project" value="UniProtKB-KW"/>
</dbReference>
<dbReference type="GO" id="GO:0003735">
    <property type="term" value="F:structural constituent of ribosome"/>
    <property type="evidence" value="ECO:0007669"/>
    <property type="project" value="InterPro"/>
</dbReference>
<dbReference type="GO" id="GO:0006412">
    <property type="term" value="P:translation"/>
    <property type="evidence" value="ECO:0007669"/>
    <property type="project" value="InterPro"/>
</dbReference>
<dbReference type="Gene3D" id="4.10.830.30">
    <property type="entry name" value="Ribosomal protein L31"/>
    <property type="match status" value="1"/>
</dbReference>
<dbReference type="InterPro" id="IPR034704">
    <property type="entry name" value="Ribosomal_bL28/bL31-like_sf"/>
</dbReference>
<dbReference type="InterPro" id="IPR002150">
    <property type="entry name" value="Ribosomal_bL31"/>
</dbReference>
<dbReference type="InterPro" id="IPR042105">
    <property type="entry name" value="Ribosomal_bL31_sf"/>
</dbReference>
<dbReference type="NCBIfam" id="TIGR00105">
    <property type="entry name" value="L31"/>
    <property type="match status" value="1"/>
</dbReference>
<dbReference type="NCBIfam" id="NF001809">
    <property type="entry name" value="PRK00528.1"/>
    <property type="match status" value="1"/>
</dbReference>
<dbReference type="PANTHER" id="PTHR33280">
    <property type="entry name" value="50S RIBOSOMAL PROTEIN L31, CHLOROPLASTIC"/>
    <property type="match status" value="1"/>
</dbReference>
<dbReference type="PANTHER" id="PTHR33280:SF1">
    <property type="entry name" value="LARGE RIBOSOMAL SUBUNIT PROTEIN BL31C"/>
    <property type="match status" value="1"/>
</dbReference>
<dbReference type="Pfam" id="PF01197">
    <property type="entry name" value="Ribosomal_L31"/>
    <property type="match status" value="1"/>
</dbReference>
<dbReference type="PRINTS" id="PR01249">
    <property type="entry name" value="RIBOSOMALL31"/>
</dbReference>
<dbReference type="SUPFAM" id="SSF143800">
    <property type="entry name" value="L28p-like"/>
    <property type="match status" value="1"/>
</dbReference>
<dbReference type="PROSITE" id="PS01143">
    <property type="entry name" value="RIBOSOMAL_L31"/>
    <property type="match status" value="1"/>
</dbReference>
<geneLocation type="chloroplast"/>
<protein>
    <recommendedName>
        <fullName evidence="2">Large ribosomal subunit protein bL31c</fullName>
    </recommendedName>
    <alternativeName>
        <fullName>50S ribosomal protein L31, chloroplastic</fullName>
    </alternativeName>
</protein>
<sequence>MPKSEIHPTWFSNAPVLSEGKTLCSIGSTKPQLQVDVWLGNHPFYTNSQTLVDSEGRVDRFMKKYGLQTKDN</sequence>
<accession>A0T0Z7</accession>
<keyword id="KW-0150">Chloroplast</keyword>
<keyword id="KW-0934">Plastid</keyword>
<keyword id="KW-0687">Ribonucleoprotein</keyword>
<keyword id="KW-0689">Ribosomal protein</keyword>
<keyword id="KW-0694">RNA-binding</keyword>
<keyword id="KW-0699">rRNA-binding</keyword>
<name>RK31_THAPS</name>